<protein>
    <recommendedName>
        <fullName evidence="1">Cell division protein FtsQ</fullName>
    </recommendedName>
</protein>
<evidence type="ECO:0000255" key="1">
    <source>
        <dbReference type="HAMAP-Rule" id="MF_00911"/>
    </source>
</evidence>
<evidence type="ECO:0000255" key="2">
    <source>
        <dbReference type="PROSITE-ProRule" id="PRU01115"/>
    </source>
</evidence>
<dbReference type="EMBL" id="CP002080">
    <property type="protein sequence ID" value="ADI89047.1"/>
    <property type="molecule type" value="Genomic_DNA"/>
</dbReference>
<dbReference type="RefSeq" id="WP_005300619.1">
    <property type="nucleotide sequence ID" value="NZ_VEIV01000003.1"/>
</dbReference>
<dbReference type="SMR" id="D8JLE3"/>
<dbReference type="GeneID" id="9380536"/>
<dbReference type="KEGG" id="acd:AOLE_00720"/>
<dbReference type="eggNOG" id="COG1589">
    <property type="taxonomic scope" value="Bacteria"/>
</dbReference>
<dbReference type="HOGENOM" id="CLU_064041_1_1_6"/>
<dbReference type="OrthoDB" id="9790370at2"/>
<dbReference type="Proteomes" id="UP000000392">
    <property type="component" value="Chromosome"/>
</dbReference>
<dbReference type="GO" id="GO:0032153">
    <property type="term" value="C:cell division site"/>
    <property type="evidence" value="ECO:0007669"/>
    <property type="project" value="UniProtKB-UniRule"/>
</dbReference>
<dbReference type="GO" id="GO:0005886">
    <property type="term" value="C:plasma membrane"/>
    <property type="evidence" value="ECO:0007669"/>
    <property type="project" value="UniProtKB-SubCell"/>
</dbReference>
<dbReference type="GO" id="GO:0090529">
    <property type="term" value="P:cell septum assembly"/>
    <property type="evidence" value="ECO:0007669"/>
    <property type="project" value="InterPro"/>
</dbReference>
<dbReference type="GO" id="GO:0043093">
    <property type="term" value="P:FtsZ-dependent cytokinesis"/>
    <property type="evidence" value="ECO:0007669"/>
    <property type="project" value="UniProtKB-UniRule"/>
</dbReference>
<dbReference type="Gene3D" id="3.40.50.11690">
    <property type="entry name" value="Cell division protein FtsQ/DivIB"/>
    <property type="match status" value="1"/>
</dbReference>
<dbReference type="Gene3D" id="3.10.20.310">
    <property type="entry name" value="membrane protein fhac"/>
    <property type="match status" value="1"/>
</dbReference>
<dbReference type="HAMAP" id="MF_00911">
    <property type="entry name" value="FtsQ_subfam"/>
    <property type="match status" value="1"/>
</dbReference>
<dbReference type="InterPro" id="IPR005548">
    <property type="entry name" value="Cell_div_FtsQ/DivIB_C"/>
</dbReference>
<dbReference type="InterPro" id="IPR026579">
    <property type="entry name" value="FtsQ"/>
</dbReference>
<dbReference type="InterPro" id="IPR045335">
    <property type="entry name" value="FtsQ_C_sf"/>
</dbReference>
<dbReference type="InterPro" id="IPR034746">
    <property type="entry name" value="POTRA"/>
</dbReference>
<dbReference type="InterPro" id="IPR013685">
    <property type="entry name" value="POTRA_FtsQ_type"/>
</dbReference>
<dbReference type="PANTHER" id="PTHR35851">
    <property type="entry name" value="CELL DIVISION PROTEIN FTSQ"/>
    <property type="match status" value="1"/>
</dbReference>
<dbReference type="PANTHER" id="PTHR35851:SF1">
    <property type="entry name" value="CELL DIVISION PROTEIN FTSQ"/>
    <property type="match status" value="1"/>
</dbReference>
<dbReference type="Pfam" id="PF03799">
    <property type="entry name" value="FtsQ_DivIB_C"/>
    <property type="match status" value="1"/>
</dbReference>
<dbReference type="Pfam" id="PF08478">
    <property type="entry name" value="POTRA_1"/>
    <property type="match status" value="1"/>
</dbReference>
<dbReference type="PROSITE" id="PS51779">
    <property type="entry name" value="POTRA"/>
    <property type="match status" value="1"/>
</dbReference>
<reference key="1">
    <citation type="journal article" date="2010" name="J. Bacteriol.">
        <title>Complete genome sequence of the diesel-degrading Acinetobacter sp. strain DR1.</title>
        <authorList>
            <person name="Jung J."/>
            <person name="Baek J.H."/>
            <person name="Park W."/>
        </authorList>
    </citation>
    <scope>NUCLEOTIDE SEQUENCE [LARGE SCALE GENOMIC DNA]</scope>
    <source>
        <strain>JCM 16667 / KCTC 23045 / DR1</strain>
    </source>
</reference>
<sequence length="284" mass="31974">MAQLPASMRRKRAAITSIHDKPPTRKQKLANAGGWVLLVIAFVVLAVGIYGLYKVITDATVAKLEVVGSTSSVETQQVMQHVAPIIKANYFTSDLEQIRDKTLEISWVDRVVVSRAWPNGIRVRVMPRHAIARWGTGRLLSDGGDVFSEAEPTIHPELPLLHGPVSQSKMMMRRYNEINQLFHPANLRLKELYLTERMTWFMQFDSGLRIIVDQDQTMNKLQRLSHLAQSDLKPVWSKISAIDLRYRNGLSIQWKNATPPKIVNGQFVVTIDDTSIAGGTKAKP</sequence>
<name>FTSQ_ACISD</name>
<keyword id="KW-0131">Cell cycle</keyword>
<keyword id="KW-0132">Cell division</keyword>
<keyword id="KW-0997">Cell inner membrane</keyword>
<keyword id="KW-1003">Cell membrane</keyword>
<keyword id="KW-0472">Membrane</keyword>
<keyword id="KW-0812">Transmembrane</keyword>
<keyword id="KW-1133">Transmembrane helix</keyword>
<gene>
    <name evidence="1" type="primary">ftsQ</name>
    <name type="ordered locus">AOLE_00720</name>
</gene>
<comment type="function">
    <text evidence="1">Essential cell division protein. May link together the upstream cell division proteins, which are predominantly cytoplasmic, with the downstream cell division proteins, which are predominantly periplasmic. May control correct divisome assembly.</text>
</comment>
<comment type="subunit">
    <text evidence="1">Part of a complex composed of FtsB, FtsL and FtsQ.</text>
</comment>
<comment type="subcellular location">
    <subcellularLocation>
        <location evidence="1">Cell inner membrane</location>
        <topology evidence="1">Single-pass type II membrane protein</topology>
    </subcellularLocation>
    <text evidence="1">Localizes to the division septum.</text>
</comment>
<comment type="similarity">
    <text evidence="1">Belongs to the FtsQ/DivIB family. FtsQ subfamily.</text>
</comment>
<feature type="chain" id="PRO_0000414653" description="Cell division protein FtsQ">
    <location>
        <begin position="1"/>
        <end position="284"/>
    </location>
</feature>
<feature type="topological domain" description="Cytoplasmic" evidence="1">
    <location>
        <begin position="1"/>
        <end position="31"/>
    </location>
</feature>
<feature type="transmembrane region" description="Helical" evidence="1">
    <location>
        <begin position="32"/>
        <end position="52"/>
    </location>
</feature>
<feature type="topological domain" description="Periplasmic" evidence="1">
    <location>
        <begin position="53"/>
        <end position="284"/>
    </location>
</feature>
<feature type="domain" description="POTRA" evidence="2">
    <location>
        <begin position="59"/>
        <end position="128"/>
    </location>
</feature>
<organism>
    <name type="scientific">Acinetobacter oleivorans (strain JCM 16667 / KCTC 23045 / DR1)</name>
    <dbReference type="NCBI Taxonomy" id="436717"/>
    <lineage>
        <taxon>Bacteria</taxon>
        <taxon>Pseudomonadati</taxon>
        <taxon>Pseudomonadota</taxon>
        <taxon>Gammaproteobacteria</taxon>
        <taxon>Moraxellales</taxon>
        <taxon>Moraxellaceae</taxon>
        <taxon>Acinetobacter</taxon>
    </lineage>
</organism>
<proteinExistence type="inferred from homology"/>
<accession>D8JLE3</accession>